<reference key="1">
    <citation type="journal article" date="1998" name="Mol. Gen. Genet.">
        <title>A conserved BURP domain defines a novel group of plant proteins with unusual primary structures.</title>
        <authorList>
            <person name="Hattori J."/>
            <person name="Boutilier K.A."/>
            <person name="van Lookeren Campagne M.M."/>
            <person name="Miki B.L."/>
        </authorList>
    </citation>
    <scope>NUCLEOTIDE SEQUENCE [MRNA]</scope>
    <scope>GENE FAMILY</scope>
    <scope>DOMAIN</scope>
</reference>
<reference key="2">
    <citation type="journal article" date="2009" name="Plant Mol. Biol.">
        <title>Protein storage vacuoles of Brassica napus zygotic embryos accumulate a BURP domain protein and perturbation of its production distorts the PSV.</title>
        <authorList>
            <person name="Teerawanichpan P."/>
            <person name="Xia Q."/>
            <person name="Caldwell S.J."/>
            <person name="Datla R."/>
            <person name="Selvaraj G."/>
        </authorList>
    </citation>
    <scope>NUCLEOTIDE SEQUENCE [GENOMIC DNA / MRNA]</scope>
    <scope>TISSUE SPECIFICITY</scope>
    <scope>DEVELOPMENTAL STAGE</scope>
    <scope>SUBCELLULAR LOCATION</scope>
</reference>
<reference key="3">
    <citation type="journal article" date="2014" name="Science">
        <title>Plant genetics. Early allopolyploid evolution in the post-Neolithic Brassica napus oilseed genome.</title>
        <authorList>
            <person name="Chalhoub B."/>
            <person name="Denoeud F."/>
            <person name="Liu S."/>
            <person name="Parkin I.A."/>
            <person name="Tang H."/>
            <person name="Wang X."/>
            <person name="Chiquet J."/>
            <person name="Belcram H."/>
            <person name="Tong C."/>
            <person name="Samans B."/>
            <person name="Correa M."/>
            <person name="Da Silva C."/>
            <person name="Just J."/>
            <person name="Falentin C."/>
            <person name="Koh C.S."/>
            <person name="Le Clainche I."/>
            <person name="Bernard M."/>
            <person name="Bento P."/>
            <person name="Noel B."/>
            <person name="Labadie K."/>
            <person name="Alberti A."/>
            <person name="Charles M."/>
            <person name="Arnaud D."/>
            <person name="Guo H."/>
            <person name="Daviaud C."/>
            <person name="Alamery S."/>
            <person name="Jabbari K."/>
            <person name="Zhao M."/>
            <person name="Edger P.P."/>
            <person name="Chelaifa H."/>
            <person name="Tack D."/>
            <person name="Lassalle G."/>
            <person name="Mestiri I."/>
            <person name="Schnel N."/>
            <person name="Le Paslier M.C."/>
            <person name="Fan G."/>
            <person name="Renault V."/>
            <person name="Bayer P.E."/>
            <person name="Golicz A.A."/>
            <person name="Manoli S."/>
            <person name="Lee T.H."/>
            <person name="Thi V.H."/>
            <person name="Chalabi S."/>
            <person name="Hu Q."/>
            <person name="Fan C."/>
            <person name="Tollenaere R."/>
            <person name="Lu Y."/>
            <person name="Battail C."/>
            <person name="Shen J."/>
            <person name="Sidebottom C.H."/>
            <person name="Wang X."/>
            <person name="Canaguier A."/>
            <person name="Chauveau A."/>
            <person name="Berard A."/>
            <person name="Deniot G."/>
            <person name="Guan M."/>
            <person name="Liu Z."/>
            <person name="Sun F."/>
            <person name="Lim Y.P."/>
            <person name="Lyons E."/>
            <person name="Town C.D."/>
            <person name="Bancroft I."/>
            <person name="Wang X."/>
            <person name="Meng J."/>
            <person name="Ma J."/>
            <person name="Pires J.C."/>
            <person name="King G.J."/>
            <person name="Brunel D."/>
            <person name="Delourme R."/>
            <person name="Renard M."/>
            <person name="Aury J.M."/>
            <person name="Adams K.L."/>
            <person name="Batley J."/>
            <person name="Snowdon R.J."/>
            <person name="Tost J."/>
            <person name="Edwards D."/>
            <person name="Zhou Y."/>
            <person name="Hua W."/>
            <person name="Sharpe A.G."/>
            <person name="Paterson A.H."/>
            <person name="Guan C."/>
            <person name="Wincker P."/>
        </authorList>
    </citation>
    <scope>NUCLEOTIDE SEQUENCE [LARGE SCALE GENOMIC DNA]</scope>
    <source>
        <strain>cv. Darmor-bzh</strain>
    </source>
</reference>
<comment type="subcellular location">
    <subcellularLocation>
        <location evidence="3">Protein storage vacuole</location>
    </subcellularLocation>
</comment>
<comment type="tissue specificity">
    <text evidence="3">Expressed in the radicle and cotyledon of germinating seeds 2 days post-imbibition (DPI), in stems and roots of 30-DPI young plants and in floral buds, but not in fully open flowers or leaves. Expressed in the embryo and seed coat tissues of developing seeds. The protein accumulates only in seeds and only long after transcript accumulation becomes evident.</text>
</comment>
<comment type="developmental stage">
    <text evidence="3">Peak of expression in seeds between 3 and 28 days post-anthesis.</text>
</comment>
<comment type="domain">
    <text evidence="4">The BURP domain located at the C-terminus has not been identified in non-plant proteins.</text>
</comment>
<name>BNM2A_BRANA</name>
<organism evidence="7">
    <name type="scientific">Brassica napus</name>
    <name type="common">Rape</name>
    <dbReference type="NCBI Taxonomy" id="3708"/>
    <lineage>
        <taxon>Eukaryota</taxon>
        <taxon>Viridiplantae</taxon>
        <taxon>Streptophyta</taxon>
        <taxon>Embryophyta</taxon>
        <taxon>Tracheophyta</taxon>
        <taxon>Spermatophyta</taxon>
        <taxon>Magnoliopsida</taxon>
        <taxon>eudicotyledons</taxon>
        <taxon>Gunneridae</taxon>
        <taxon>Pentapetalae</taxon>
        <taxon>rosids</taxon>
        <taxon>malvids</taxon>
        <taxon>Brassicales</taxon>
        <taxon>Brassicaceae</taxon>
        <taxon>Brassiceae</taxon>
        <taxon>Brassica</taxon>
    </lineage>
</organism>
<keyword id="KW-1185">Reference proteome</keyword>
<keyword id="KW-0732">Signal</keyword>
<keyword id="KW-0926">Vacuole</keyword>
<proteinExistence type="evidence at transcript level"/>
<dbReference type="EMBL" id="AF049028">
    <property type="protein sequence ID" value="AAC15700.1"/>
    <property type="molecule type" value="mRNA"/>
</dbReference>
<dbReference type="EMBL" id="FJ203999">
    <property type="protein sequence ID" value="ACO54860.1"/>
    <property type="molecule type" value="mRNA"/>
</dbReference>
<dbReference type="EMBL" id="FJ204000">
    <property type="protein sequence ID" value="ACO54861.1"/>
    <property type="molecule type" value="Genomic_DNA"/>
</dbReference>
<dbReference type="EMBL" id="LK032064">
    <property type="protein sequence ID" value="CDY16489.1"/>
    <property type="molecule type" value="Genomic_DNA"/>
</dbReference>
<dbReference type="PIR" id="T07844">
    <property type="entry name" value="T07844"/>
</dbReference>
<dbReference type="RefSeq" id="NP_001303011.1">
    <property type="nucleotide sequence ID" value="NM_001316082.1"/>
</dbReference>
<dbReference type="SMR" id="O65009"/>
<dbReference type="STRING" id="3708.O65009"/>
<dbReference type="PaxDb" id="3708-O65009"/>
<dbReference type="EnsemblPlants" id="CDY16489">
    <property type="protein sequence ID" value="CDY16489"/>
    <property type="gene ID" value="GSBRNA2T00091082001"/>
</dbReference>
<dbReference type="GeneID" id="106439079"/>
<dbReference type="Gramene" id="CDY16489">
    <property type="protein sequence ID" value="CDY16489"/>
    <property type="gene ID" value="GSBRNA2T00091082001"/>
</dbReference>
<dbReference type="KEGG" id="bna:106439079"/>
<dbReference type="OMA" id="MQKGENK"/>
<dbReference type="OrthoDB" id="1909293at2759"/>
<dbReference type="Proteomes" id="UP000028999">
    <property type="component" value="Unassembled WGS sequence"/>
</dbReference>
<dbReference type="GO" id="GO:0000326">
    <property type="term" value="C:protein storage vacuole"/>
    <property type="evidence" value="ECO:0007669"/>
    <property type="project" value="UniProtKB-SubCell"/>
</dbReference>
<dbReference type="InterPro" id="IPR044816">
    <property type="entry name" value="BURP"/>
</dbReference>
<dbReference type="InterPro" id="IPR004873">
    <property type="entry name" value="BURP_dom"/>
</dbReference>
<dbReference type="PANTHER" id="PTHR31236">
    <property type="entry name" value="BURP DOMAIN PROTEIN USPL1-LIKE"/>
    <property type="match status" value="1"/>
</dbReference>
<dbReference type="PANTHER" id="PTHR31236:SF63">
    <property type="entry name" value="BURP DOMAIN-CONTAINING PROTEIN BNM2A"/>
    <property type="match status" value="1"/>
</dbReference>
<dbReference type="Pfam" id="PF03181">
    <property type="entry name" value="BURP"/>
    <property type="match status" value="1"/>
</dbReference>
<dbReference type="SMART" id="SM01045">
    <property type="entry name" value="BURP"/>
    <property type="match status" value="1"/>
</dbReference>
<dbReference type="PROSITE" id="PS51277">
    <property type="entry name" value="BURP"/>
    <property type="match status" value="1"/>
</dbReference>
<accession>O65009</accession>
<protein>
    <recommendedName>
        <fullName evidence="5">BURP domain-containing protein BNM2A</fullName>
    </recommendedName>
    <alternativeName>
        <fullName evidence="6">Brassica napus microspore-derived embryo protein 2</fullName>
        <shortName evidence="6">BNM2</shortName>
    </alternativeName>
</protein>
<evidence type="ECO:0000255" key="1"/>
<evidence type="ECO:0000255" key="2">
    <source>
        <dbReference type="PROSITE-ProRule" id="PRU00604"/>
    </source>
</evidence>
<evidence type="ECO:0000269" key="3">
    <source>
    </source>
</evidence>
<evidence type="ECO:0000269" key="4">
    <source>
    </source>
</evidence>
<evidence type="ECO:0000303" key="5">
    <source>
    </source>
</evidence>
<evidence type="ECO:0000303" key="6">
    <source>
    </source>
</evidence>
<evidence type="ECO:0000312" key="7">
    <source>
        <dbReference type="EMBL" id="AAC15700.1"/>
    </source>
</evidence>
<evidence type="ECO:0000312" key="8">
    <source>
        <dbReference type="EMBL" id="CDY16489.1"/>
    </source>
</evidence>
<sequence>MASLRFSVTFPALLSLLLLSLWVVEAYTSRKLISNNEQEGQNISHLFKDGEFEDPTMYMFFKISDLKLGTKLPIYFNKNDLRKVPPLLTRQEADLIPFSESNLDFLLNHFSISKDSPQGKAMKETLKRCDFKAIEGEYKFCGTSLESMLDLAKKTIASNADLKVMTTKVMVPDQNRISYALHNYTFAEVPKELDGIKVLGCHRMPYPYVVYYCHGHKSGTKVFEVNLMSDDGIQLVVGPAVCHMDTSMWNADHVAFKVLKIEPRSAPVCHFFPLDNIVWVSK</sequence>
<gene>
    <name evidence="5" type="primary">BNM2A</name>
    <name evidence="8" type="ordered locus">BnaA08g02780D</name>
    <name evidence="8" type="ORF">GSBRNA2T00091082001</name>
</gene>
<feature type="signal peptide" evidence="1">
    <location>
        <begin position="1"/>
        <end position="26"/>
    </location>
</feature>
<feature type="chain" id="PRO_5005928898" description="BURP domain-containing protein BNM2A">
    <location>
        <begin position="27"/>
        <end position="282"/>
    </location>
</feature>
<feature type="domain" description="BURP" evidence="2">
    <location>
        <begin position="60"/>
        <end position="282"/>
    </location>
</feature>